<keyword id="KW-0963">Cytoplasm</keyword>
<keyword id="KW-0269">Exonuclease</keyword>
<keyword id="KW-0378">Hydrolase</keyword>
<keyword id="KW-0540">Nuclease</keyword>
<protein>
    <recommendedName>
        <fullName evidence="1">Oligoribonuclease</fullName>
        <ecNumber evidence="1">3.1.15.-</ecNumber>
    </recommendedName>
</protein>
<reference key="1">
    <citation type="journal article" date="2006" name="Proc. Natl. Acad. Sci. U.S.A.">
        <title>The complete genome of Rhodococcus sp. RHA1 provides insights into a catabolic powerhouse.</title>
        <authorList>
            <person name="McLeod M.P."/>
            <person name="Warren R.L."/>
            <person name="Hsiao W.W.L."/>
            <person name="Araki N."/>
            <person name="Myhre M."/>
            <person name="Fernandes C."/>
            <person name="Miyazawa D."/>
            <person name="Wong W."/>
            <person name="Lillquist A.L."/>
            <person name="Wang D."/>
            <person name="Dosanjh M."/>
            <person name="Hara H."/>
            <person name="Petrescu A."/>
            <person name="Morin R.D."/>
            <person name="Yang G."/>
            <person name="Stott J.M."/>
            <person name="Schein J.E."/>
            <person name="Shin H."/>
            <person name="Smailus D."/>
            <person name="Siddiqui A.S."/>
            <person name="Marra M.A."/>
            <person name="Jones S.J.M."/>
            <person name="Holt R."/>
            <person name="Brinkman F.S.L."/>
            <person name="Miyauchi K."/>
            <person name="Fukuda M."/>
            <person name="Davies J.E."/>
            <person name="Mohn W.W."/>
            <person name="Eltis L.D."/>
        </authorList>
    </citation>
    <scope>NUCLEOTIDE SEQUENCE [LARGE SCALE GENOMIC DNA]</scope>
    <source>
        <strain>RHA1</strain>
    </source>
</reference>
<comment type="function">
    <text evidence="1">3'-to-5' exoribonuclease specific for small oligoribonucleotides.</text>
</comment>
<comment type="subcellular location">
    <subcellularLocation>
        <location evidence="1">Cytoplasm</location>
    </subcellularLocation>
</comment>
<comment type="similarity">
    <text evidence="1">Belongs to the oligoribonuclease family.</text>
</comment>
<name>ORN_RHOJR</name>
<sequence>MQDKLVWIDCEMTGLRLGTDKLIEIAALVTDSELNVLGEGVDIVIHADDDALAAMPDVVTKMHENSGLTDEVRKSTVTLAEAEQQVLAYIREHVPVAGTAPLAGNSIATDRGFIARDMPDLDTYLHYRMIDVSSIKELSRRWYPRIYFGQPEKGLAHRALADIRESIRELKYYRKTAFVPEPGPSTSDIAAVVEELGPA</sequence>
<feature type="chain" id="PRO_1000004280" description="Oligoribonuclease">
    <location>
        <begin position="1"/>
        <end position="199"/>
    </location>
</feature>
<feature type="domain" description="Exonuclease" evidence="1">
    <location>
        <begin position="5"/>
        <end position="170"/>
    </location>
</feature>
<feature type="active site" evidence="1">
    <location>
        <position position="127"/>
    </location>
</feature>
<accession>Q0SGU7</accession>
<dbReference type="EC" id="3.1.15.-" evidence="1"/>
<dbReference type="EMBL" id="CP000431">
    <property type="protein sequence ID" value="ABG93239.1"/>
    <property type="molecule type" value="Genomic_DNA"/>
</dbReference>
<dbReference type="RefSeq" id="WP_011594440.1">
    <property type="nucleotide sequence ID" value="NC_008268.1"/>
</dbReference>
<dbReference type="SMR" id="Q0SGU7"/>
<dbReference type="KEGG" id="rha:RHA1_ro01418"/>
<dbReference type="PATRIC" id="fig|101510.16.peg.1443"/>
<dbReference type="eggNOG" id="COG1949">
    <property type="taxonomic scope" value="Bacteria"/>
</dbReference>
<dbReference type="HOGENOM" id="CLU_064761_3_0_11"/>
<dbReference type="OrthoDB" id="9801329at2"/>
<dbReference type="Proteomes" id="UP000008710">
    <property type="component" value="Chromosome"/>
</dbReference>
<dbReference type="GO" id="GO:0005737">
    <property type="term" value="C:cytoplasm"/>
    <property type="evidence" value="ECO:0007669"/>
    <property type="project" value="UniProtKB-SubCell"/>
</dbReference>
<dbReference type="GO" id="GO:0000175">
    <property type="term" value="F:3'-5'-RNA exonuclease activity"/>
    <property type="evidence" value="ECO:0007669"/>
    <property type="project" value="InterPro"/>
</dbReference>
<dbReference type="GO" id="GO:0003676">
    <property type="term" value="F:nucleic acid binding"/>
    <property type="evidence" value="ECO:0007669"/>
    <property type="project" value="InterPro"/>
</dbReference>
<dbReference type="CDD" id="cd06135">
    <property type="entry name" value="Orn"/>
    <property type="match status" value="1"/>
</dbReference>
<dbReference type="FunFam" id="3.30.420.10:FF:000003">
    <property type="entry name" value="Oligoribonuclease"/>
    <property type="match status" value="1"/>
</dbReference>
<dbReference type="Gene3D" id="3.30.420.10">
    <property type="entry name" value="Ribonuclease H-like superfamily/Ribonuclease H"/>
    <property type="match status" value="1"/>
</dbReference>
<dbReference type="HAMAP" id="MF_00045">
    <property type="entry name" value="Oligoribonuclease"/>
    <property type="match status" value="1"/>
</dbReference>
<dbReference type="InterPro" id="IPR013520">
    <property type="entry name" value="Exonuclease_RNaseT/DNA_pol3"/>
</dbReference>
<dbReference type="InterPro" id="IPR022894">
    <property type="entry name" value="Oligoribonuclease"/>
</dbReference>
<dbReference type="InterPro" id="IPR012337">
    <property type="entry name" value="RNaseH-like_sf"/>
</dbReference>
<dbReference type="InterPro" id="IPR036397">
    <property type="entry name" value="RNaseH_sf"/>
</dbReference>
<dbReference type="NCBIfam" id="NF003765">
    <property type="entry name" value="PRK05359.1"/>
    <property type="match status" value="1"/>
</dbReference>
<dbReference type="PANTHER" id="PTHR11046">
    <property type="entry name" value="OLIGORIBONUCLEASE, MITOCHONDRIAL"/>
    <property type="match status" value="1"/>
</dbReference>
<dbReference type="PANTHER" id="PTHR11046:SF0">
    <property type="entry name" value="OLIGORIBONUCLEASE, MITOCHONDRIAL"/>
    <property type="match status" value="1"/>
</dbReference>
<dbReference type="Pfam" id="PF00929">
    <property type="entry name" value="RNase_T"/>
    <property type="match status" value="1"/>
</dbReference>
<dbReference type="SMART" id="SM00479">
    <property type="entry name" value="EXOIII"/>
    <property type="match status" value="1"/>
</dbReference>
<dbReference type="SUPFAM" id="SSF53098">
    <property type="entry name" value="Ribonuclease H-like"/>
    <property type="match status" value="1"/>
</dbReference>
<proteinExistence type="inferred from homology"/>
<evidence type="ECO:0000255" key="1">
    <source>
        <dbReference type="HAMAP-Rule" id="MF_00045"/>
    </source>
</evidence>
<gene>
    <name evidence="1" type="primary">orn</name>
    <name type="ordered locus">RHA1_ro01418</name>
</gene>
<organism>
    <name type="scientific">Rhodococcus jostii (strain RHA1)</name>
    <dbReference type="NCBI Taxonomy" id="101510"/>
    <lineage>
        <taxon>Bacteria</taxon>
        <taxon>Bacillati</taxon>
        <taxon>Actinomycetota</taxon>
        <taxon>Actinomycetes</taxon>
        <taxon>Mycobacteriales</taxon>
        <taxon>Nocardiaceae</taxon>
        <taxon>Rhodococcus</taxon>
    </lineage>
</organism>